<feature type="chain" id="PRO_0000360216" description="Uncharacterized MFS-type transporter YcnB">
    <location>
        <begin position="1"/>
        <end position="472"/>
    </location>
</feature>
<feature type="transmembrane region" description="Helical" evidence="1">
    <location>
        <begin position="14"/>
        <end position="34"/>
    </location>
</feature>
<feature type="transmembrane region" description="Helical" evidence="1">
    <location>
        <begin position="53"/>
        <end position="73"/>
    </location>
</feature>
<feature type="transmembrane region" description="Helical" evidence="1">
    <location>
        <begin position="80"/>
        <end position="100"/>
    </location>
</feature>
<feature type="transmembrane region" description="Helical" evidence="1">
    <location>
        <begin position="113"/>
        <end position="133"/>
    </location>
</feature>
<feature type="transmembrane region" description="Helical" evidence="1">
    <location>
        <begin position="142"/>
        <end position="162"/>
    </location>
</feature>
<feature type="transmembrane region" description="Helical" evidence="1">
    <location>
        <begin position="169"/>
        <end position="189"/>
    </location>
</feature>
<feature type="transmembrane region" description="Helical" evidence="1">
    <location>
        <begin position="202"/>
        <end position="222"/>
    </location>
</feature>
<feature type="transmembrane region" description="Helical" evidence="1">
    <location>
        <begin position="227"/>
        <end position="247"/>
    </location>
</feature>
<feature type="transmembrane region" description="Helical" evidence="1">
    <location>
        <begin position="263"/>
        <end position="283"/>
    </location>
</feature>
<feature type="transmembrane region" description="Helical" evidence="1">
    <location>
        <begin position="302"/>
        <end position="322"/>
    </location>
</feature>
<feature type="transmembrane region" description="Helical" evidence="1">
    <location>
        <begin position="333"/>
        <end position="353"/>
    </location>
</feature>
<feature type="transmembrane region" description="Helical" evidence="1">
    <location>
        <begin position="359"/>
        <end position="379"/>
    </location>
</feature>
<feature type="transmembrane region" description="Helical" evidence="1">
    <location>
        <begin position="405"/>
        <end position="427"/>
    </location>
</feature>
<feature type="transmembrane region" description="Helical" evidence="1">
    <location>
        <begin position="437"/>
        <end position="457"/>
    </location>
</feature>
<accession>P94422</accession>
<accession>Q797N8</accession>
<name>YCNB_BACSU</name>
<dbReference type="EMBL" id="D50453">
    <property type="protein sequence ID" value="BAA09016.1"/>
    <property type="molecule type" value="Genomic_DNA"/>
</dbReference>
<dbReference type="EMBL" id="AL009126">
    <property type="protein sequence ID" value="CAB12192.1"/>
    <property type="molecule type" value="Genomic_DNA"/>
</dbReference>
<dbReference type="PIR" id="F69763">
    <property type="entry name" value="F69763"/>
</dbReference>
<dbReference type="RefSeq" id="NP_388266.1">
    <property type="nucleotide sequence ID" value="NC_000964.3"/>
</dbReference>
<dbReference type="RefSeq" id="WP_003246604.1">
    <property type="nucleotide sequence ID" value="NZ_OZ025638.1"/>
</dbReference>
<dbReference type="SMR" id="P94422"/>
<dbReference type="FunCoup" id="P94422">
    <property type="interactions" value="157"/>
</dbReference>
<dbReference type="STRING" id="224308.BSU03840"/>
<dbReference type="PaxDb" id="224308-BSU03840"/>
<dbReference type="EnsemblBacteria" id="CAB12192">
    <property type="protein sequence ID" value="CAB12192"/>
    <property type="gene ID" value="BSU_03840"/>
</dbReference>
<dbReference type="GeneID" id="938275"/>
<dbReference type="KEGG" id="bsu:BSU03840"/>
<dbReference type="PATRIC" id="fig|224308.179.peg.407"/>
<dbReference type="eggNOG" id="COG2814">
    <property type="taxonomic scope" value="Bacteria"/>
</dbReference>
<dbReference type="InParanoid" id="P94422"/>
<dbReference type="OrthoDB" id="9816041at2"/>
<dbReference type="PhylomeDB" id="P94422"/>
<dbReference type="BioCyc" id="BSUB:BSU03840-MONOMER"/>
<dbReference type="Proteomes" id="UP000001570">
    <property type="component" value="Chromosome"/>
</dbReference>
<dbReference type="GO" id="GO:0016020">
    <property type="term" value="C:membrane"/>
    <property type="evidence" value="ECO:0000318"/>
    <property type="project" value="GO_Central"/>
</dbReference>
<dbReference type="GO" id="GO:0005886">
    <property type="term" value="C:plasma membrane"/>
    <property type="evidence" value="ECO:0007669"/>
    <property type="project" value="UniProtKB-SubCell"/>
</dbReference>
<dbReference type="GO" id="GO:0022857">
    <property type="term" value="F:transmembrane transporter activity"/>
    <property type="evidence" value="ECO:0007669"/>
    <property type="project" value="InterPro"/>
</dbReference>
<dbReference type="CDD" id="cd17503">
    <property type="entry name" value="MFS_LmrB_MDR_like"/>
    <property type="match status" value="1"/>
</dbReference>
<dbReference type="Gene3D" id="1.20.1250.20">
    <property type="entry name" value="MFS general substrate transporter like domains"/>
    <property type="match status" value="1"/>
</dbReference>
<dbReference type="Gene3D" id="1.20.1720.10">
    <property type="entry name" value="Multidrug resistance protein D"/>
    <property type="match status" value="1"/>
</dbReference>
<dbReference type="InterPro" id="IPR004638">
    <property type="entry name" value="EmrB-like"/>
</dbReference>
<dbReference type="InterPro" id="IPR011701">
    <property type="entry name" value="MFS"/>
</dbReference>
<dbReference type="InterPro" id="IPR020846">
    <property type="entry name" value="MFS_dom"/>
</dbReference>
<dbReference type="InterPro" id="IPR036259">
    <property type="entry name" value="MFS_trans_sf"/>
</dbReference>
<dbReference type="NCBIfam" id="TIGR00711">
    <property type="entry name" value="efflux_EmrB"/>
    <property type="match status" value="1"/>
</dbReference>
<dbReference type="PANTHER" id="PTHR42718:SF24">
    <property type="entry name" value="MAJOR FACILITATOR SUPERFAMILY (MFS) PROFILE DOMAIN-CONTAINING PROTEIN"/>
    <property type="match status" value="1"/>
</dbReference>
<dbReference type="PANTHER" id="PTHR42718">
    <property type="entry name" value="MAJOR FACILITATOR SUPERFAMILY MULTIDRUG TRANSPORTER MFSC"/>
    <property type="match status" value="1"/>
</dbReference>
<dbReference type="Pfam" id="PF07690">
    <property type="entry name" value="MFS_1"/>
    <property type="match status" value="1"/>
</dbReference>
<dbReference type="PRINTS" id="PR01036">
    <property type="entry name" value="TCRTETB"/>
</dbReference>
<dbReference type="SUPFAM" id="SSF103473">
    <property type="entry name" value="MFS general substrate transporter"/>
    <property type="match status" value="1"/>
</dbReference>
<dbReference type="PROSITE" id="PS50850">
    <property type="entry name" value="MFS"/>
    <property type="match status" value="1"/>
</dbReference>
<sequence>MNTSIEQKPFNRSVIVGILLAGAFVAILNQTLLITALPHIMRDFNVDANQAQWLTTSFMLTNGILIPITAFLIEKFTSRALLITAMSIFTAGTVVGAFAPNFPVLLTARIIQAAGAGIMMPLMQTVFLTIFPIEKRGQAMGMVGLVISFAPAIGPTLSGWAVEAFSWRSLFYIILPFAVIDLILASILMKNVTTLRKTQIDILSVILSTFGFGGLLYGFSSVGSYGWSSSTVLISLLVGVIALLLFITRQMKLKKPMLEFRVFTFGVFSLTTLLGTLVFALLIGTETILPLYTQNVRDVTAFDTGLMLLPGAVVMGFMSPIIGRIFDRVGGRGLAIAGFCIIFLTSLPFMQLTDHTSLAWIVVLYTVRLLGTAMIMMPVTTAGINALPRHLIPHGTAMNNTIRQVGGSIGTALLVSVMSNQAAHAGTTNVKHAALHGMNAAFIVAAVIALVGFLLSFTLKKPQRPAEQQPAR</sequence>
<proteinExistence type="inferred from homology"/>
<evidence type="ECO:0000255" key="1"/>
<evidence type="ECO:0000305" key="2"/>
<comment type="subcellular location">
    <subcellularLocation>
        <location evidence="2">Cell membrane</location>
        <topology evidence="2">Multi-pass membrane protein</topology>
    </subcellularLocation>
</comment>
<comment type="similarity">
    <text evidence="2">Belongs to the major facilitator superfamily. EmrB family.</text>
</comment>
<reference key="1">
    <citation type="journal article" date="1996" name="Microbiology">
        <title>The 25 degrees-36 degrees region of the Bacillus subtilis chromosome: determination of the sequence of a 146 kb segment and identification of 113 genes.</title>
        <authorList>
            <person name="Yamane K."/>
            <person name="Kumano M."/>
            <person name="Kurita K."/>
        </authorList>
    </citation>
    <scope>NUCLEOTIDE SEQUENCE [GENOMIC DNA]</scope>
    <source>
        <strain>168</strain>
    </source>
</reference>
<reference key="2">
    <citation type="journal article" date="1997" name="Nature">
        <title>The complete genome sequence of the Gram-positive bacterium Bacillus subtilis.</title>
        <authorList>
            <person name="Kunst F."/>
            <person name="Ogasawara N."/>
            <person name="Moszer I."/>
            <person name="Albertini A.M."/>
            <person name="Alloni G."/>
            <person name="Azevedo V."/>
            <person name="Bertero M.G."/>
            <person name="Bessieres P."/>
            <person name="Bolotin A."/>
            <person name="Borchert S."/>
            <person name="Borriss R."/>
            <person name="Boursier L."/>
            <person name="Brans A."/>
            <person name="Braun M."/>
            <person name="Brignell S.C."/>
            <person name="Bron S."/>
            <person name="Brouillet S."/>
            <person name="Bruschi C.V."/>
            <person name="Caldwell B."/>
            <person name="Capuano V."/>
            <person name="Carter N.M."/>
            <person name="Choi S.-K."/>
            <person name="Codani J.-J."/>
            <person name="Connerton I.F."/>
            <person name="Cummings N.J."/>
            <person name="Daniel R.A."/>
            <person name="Denizot F."/>
            <person name="Devine K.M."/>
            <person name="Duesterhoeft A."/>
            <person name="Ehrlich S.D."/>
            <person name="Emmerson P.T."/>
            <person name="Entian K.-D."/>
            <person name="Errington J."/>
            <person name="Fabret C."/>
            <person name="Ferrari E."/>
            <person name="Foulger D."/>
            <person name="Fritz C."/>
            <person name="Fujita M."/>
            <person name="Fujita Y."/>
            <person name="Fuma S."/>
            <person name="Galizzi A."/>
            <person name="Galleron N."/>
            <person name="Ghim S.-Y."/>
            <person name="Glaser P."/>
            <person name="Goffeau A."/>
            <person name="Golightly E.J."/>
            <person name="Grandi G."/>
            <person name="Guiseppi G."/>
            <person name="Guy B.J."/>
            <person name="Haga K."/>
            <person name="Haiech J."/>
            <person name="Harwood C.R."/>
            <person name="Henaut A."/>
            <person name="Hilbert H."/>
            <person name="Holsappel S."/>
            <person name="Hosono S."/>
            <person name="Hullo M.-F."/>
            <person name="Itaya M."/>
            <person name="Jones L.-M."/>
            <person name="Joris B."/>
            <person name="Karamata D."/>
            <person name="Kasahara Y."/>
            <person name="Klaerr-Blanchard M."/>
            <person name="Klein C."/>
            <person name="Kobayashi Y."/>
            <person name="Koetter P."/>
            <person name="Koningstein G."/>
            <person name="Krogh S."/>
            <person name="Kumano M."/>
            <person name="Kurita K."/>
            <person name="Lapidus A."/>
            <person name="Lardinois S."/>
            <person name="Lauber J."/>
            <person name="Lazarevic V."/>
            <person name="Lee S.-M."/>
            <person name="Levine A."/>
            <person name="Liu H."/>
            <person name="Masuda S."/>
            <person name="Mauel C."/>
            <person name="Medigue C."/>
            <person name="Medina N."/>
            <person name="Mellado R.P."/>
            <person name="Mizuno M."/>
            <person name="Moestl D."/>
            <person name="Nakai S."/>
            <person name="Noback M."/>
            <person name="Noone D."/>
            <person name="O'Reilly M."/>
            <person name="Ogawa K."/>
            <person name="Ogiwara A."/>
            <person name="Oudega B."/>
            <person name="Park S.-H."/>
            <person name="Parro V."/>
            <person name="Pohl T.M."/>
            <person name="Portetelle D."/>
            <person name="Porwollik S."/>
            <person name="Prescott A.M."/>
            <person name="Presecan E."/>
            <person name="Pujic P."/>
            <person name="Purnelle B."/>
            <person name="Rapoport G."/>
            <person name="Rey M."/>
            <person name="Reynolds S."/>
            <person name="Rieger M."/>
            <person name="Rivolta C."/>
            <person name="Rocha E."/>
            <person name="Roche B."/>
            <person name="Rose M."/>
            <person name="Sadaie Y."/>
            <person name="Sato T."/>
            <person name="Scanlan E."/>
            <person name="Schleich S."/>
            <person name="Schroeter R."/>
            <person name="Scoffone F."/>
            <person name="Sekiguchi J."/>
            <person name="Sekowska A."/>
            <person name="Seror S.J."/>
            <person name="Serror P."/>
            <person name="Shin B.-S."/>
            <person name="Soldo B."/>
            <person name="Sorokin A."/>
            <person name="Tacconi E."/>
            <person name="Takagi T."/>
            <person name="Takahashi H."/>
            <person name="Takemaru K."/>
            <person name="Takeuchi M."/>
            <person name="Tamakoshi A."/>
            <person name="Tanaka T."/>
            <person name="Terpstra P."/>
            <person name="Tognoni A."/>
            <person name="Tosato V."/>
            <person name="Uchiyama S."/>
            <person name="Vandenbol M."/>
            <person name="Vannier F."/>
            <person name="Vassarotti A."/>
            <person name="Viari A."/>
            <person name="Wambutt R."/>
            <person name="Wedler E."/>
            <person name="Wedler H."/>
            <person name="Weitzenegger T."/>
            <person name="Winters P."/>
            <person name="Wipat A."/>
            <person name="Yamamoto H."/>
            <person name="Yamane K."/>
            <person name="Yasumoto K."/>
            <person name="Yata K."/>
            <person name="Yoshida K."/>
            <person name="Yoshikawa H.-F."/>
            <person name="Zumstein E."/>
            <person name="Yoshikawa H."/>
            <person name="Danchin A."/>
        </authorList>
    </citation>
    <scope>NUCLEOTIDE SEQUENCE [LARGE SCALE GENOMIC DNA]</scope>
    <source>
        <strain>168</strain>
    </source>
</reference>
<organism>
    <name type="scientific">Bacillus subtilis (strain 168)</name>
    <dbReference type="NCBI Taxonomy" id="224308"/>
    <lineage>
        <taxon>Bacteria</taxon>
        <taxon>Bacillati</taxon>
        <taxon>Bacillota</taxon>
        <taxon>Bacilli</taxon>
        <taxon>Bacillales</taxon>
        <taxon>Bacillaceae</taxon>
        <taxon>Bacillus</taxon>
    </lineage>
</organism>
<protein>
    <recommendedName>
        <fullName>Uncharacterized MFS-type transporter YcnB</fullName>
    </recommendedName>
</protein>
<gene>
    <name type="primary">ycnB</name>
    <name type="ordered locus">BSU03840</name>
</gene>
<keyword id="KW-1003">Cell membrane</keyword>
<keyword id="KW-0472">Membrane</keyword>
<keyword id="KW-1185">Reference proteome</keyword>
<keyword id="KW-0812">Transmembrane</keyword>
<keyword id="KW-1133">Transmembrane helix</keyword>
<keyword id="KW-0813">Transport</keyword>